<dbReference type="EC" id="2.7.7.13" evidence="3"/>
<dbReference type="EMBL" id="BC078357">
    <property type="protein sequence ID" value="AAH78357.1"/>
    <property type="molecule type" value="mRNA"/>
</dbReference>
<dbReference type="SMR" id="Q6DBU5"/>
<dbReference type="FunCoup" id="Q6DBU5">
    <property type="interactions" value="904"/>
</dbReference>
<dbReference type="STRING" id="7955.ENSDARP00000022618"/>
<dbReference type="PaxDb" id="7955-ENSDARP00000022618"/>
<dbReference type="AGR" id="ZFIN:ZDB-GENE-040801-234"/>
<dbReference type="ZFIN" id="ZDB-GENE-040801-234">
    <property type="gene designation" value="gmppb"/>
</dbReference>
<dbReference type="eggNOG" id="KOG1322">
    <property type="taxonomic scope" value="Eukaryota"/>
</dbReference>
<dbReference type="InParanoid" id="Q6DBU5"/>
<dbReference type="PhylomeDB" id="Q6DBU5"/>
<dbReference type="BRENDA" id="2.7.7.13">
    <property type="organism ID" value="928"/>
</dbReference>
<dbReference type="Reactome" id="R-DRE-446205">
    <property type="pathway name" value="Synthesis of GDP-mannose"/>
</dbReference>
<dbReference type="UniPathway" id="UPA00126">
    <property type="reaction ID" value="UER00930"/>
</dbReference>
<dbReference type="PRO" id="PR:Q6DBU5"/>
<dbReference type="Proteomes" id="UP000000437">
    <property type="component" value="Unplaced"/>
</dbReference>
<dbReference type="GO" id="GO:0005737">
    <property type="term" value="C:cytoplasm"/>
    <property type="evidence" value="ECO:0000318"/>
    <property type="project" value="GO_Central"/>
</dbReference>
<dbReference type="GO" id="GO:0005525">
    <property type="term" value="F:GTP binding"/>
    <property type="evidence" value="ECO:0007669"/>
    <property type="project" value="UniProtKB-KW"/>
</dbReference>
<dbReference type="GO" id="GO:0004475">
    <property type="term" value="F:mannose-1-phosphate guanylyltransferase (GTP) activity"/>
    <property type="evidence" value="ECO:0000318"/>
    <property type="project" value="GO_Central"/>
</dbReference>
<dbReference type="GO" id="GO:0046872">
    <property type="term" value="F:metal ion binding"/>
    <property type="evidence" value="ECO:0007669"/>
    <property type="project" value="UniProtKB-KW"/>
</dbReference>
<dbReference type="GO" id="GO:0009298">
    <property type="term" value="P:GDP-mannose biosynthetic process"/>
    <property type="evidence" value="ECO:0000250"/>
    <property type="project" value="UniProtKB"/>
</dbReference>
<dbReference type="GO" id="GO:0055001">
    <property type="term" value="P:muscle cell development"/>
    <property type="evidence" value="ECO:0000315"/>
    <property type="project" value="ZFIN"/>
</dbReference>
<dbReference type="GO" id="GO:0048666">
    <property type="term" value="P:neuron development"/>
    <property type="evidence" value="ECO:0000315"/>
    <property type="project" value="ZFIN"/>
</dbReference>
<dbReference type="GO" id="GO:0006486">
    <property type="term" value="P:protein glycosylation"/>
    <property type="evidence" value="ECO:0000315"/>
    <property type="project" value="ZFIN"/>
</dbReference>
<dbReference type="GO" id="GO:0007519">
    <property type="term" value="P:skeletal muscle tissue development"/>
    <property type="evidence" value="ECO:0000315"/>
    <property type="project" value="ZFIN"/>
</dbReference>
<dbReference type="CDD" id="cd06425">
    <property type="entry name" value="M1P_guanylylT_B_like_N"/>
    <property type="match status" value="1"/>
</dbReference>
<dbReference type="FunFam" id="2.160.10.10:FF:000018">
    <property type="entry name" value="Mannose-1-phosphate guanyltransferase beta"/>
    <property type="match status" value="1"/>
</dbReference>
<dbReference type="FunFam" id="3.90.550.10:FF:000013">
    <property type="entry name" value="mannose-1-phosphate guanyltransferase beta"/>
    <property type="match status" value="1"/>
</dbReference>
<dbReference type="Gene3D" id="2.160.10.10">
    <property type="entry name" value="Hexapeptide repeat proteins"/>
    <property type="match status" value="1"/>
</dbReference>
<dbReference type="Gene3D" id="3.90.550.10">
    <property type="entry name" value="Spore Coat Polysaccharide Biosynthesis Protein SpsA, Chain A"/>
    <property type="match status" value="1"/>
</dbReference>
<dbReference type="InterPro" id="IPR056729">
    <property type="entry name" value="GMPPB_C"/>
</dbReference>
<dbReference type="InterPro" id="IPR045233">
    <property type="entry name" value="GMPPB_N"/>
</dbReference>
<dbReference type="InterPro" id="IPR018357">
    <property type="entry name" value="Hexapep_transf_CS"/>
</dbReference>
<dbReference type="InterPro" id="IPR050486">
    <property type="entry name" value="Mannose-1P_guanyltransferase"/>
</dbReference>
<dbReference type="InterPro" id="IPR005835">
    <property type="entry name" value="NTP_transferase_dom"/>
</dbReference>
<dbReference type="InterPro" id="IPR029044">
    <property type="entry name" value="Nucleotide-diphossugar_trans"/>
</dbReference>
<dbReference type="PANTHER" id="PTHR22572">
    <property type="entry name" value="SUGAR-1-PHOSPHATE GUANYL TRANSFERASE"/>
    <property type="match status" value="1"/>
</dbReference>
<dbReference type="Pfam" id="PF25087">
    <property type="entry name" value="GMPPB_C"/>
    <property type="match status" value="1"/>
</dbReference>
<dbReference type="Pfam" id="PF00483">
    <property type="entry name" value="NTP_transferase"/>
    <property type="match status" value="1"/>
</dbReference>
<dbReference type="SUPFAM" id="SSF53448">
    <property type="entry name" value="Nucleotide-diphospho-sugar transferases"/>
    <property type="match status" value="1"/>
</dbReference>
<dbReference type="PROSITE" id="PS00101">
    <property type="entry name" value="HEXAPEP_TRANSFERASES"/>
    <property type="match status" value="1"/>
</dbReference>
<keyword id="KW-0342">GTP-binding</keyword>
<keyword id="KW-0460">Magnesium</keyword>
<keyword id="KW-0479">Metal-binding</keyword>
<keyword id="KW-0547">Nucleotide-binding</keyword>
<keyword id="KW-0548">Nucleotidyltransferase</keyword>
<keyword id="KW-1185">Reference proteome</keyword>
<keyword id="KW-0808">Transferase</keyword>
<evidence type="ECO:0000250" key="1">
    <source>
        <dbReference type="UniProtKB" id="Q9Y5P6"/>
    </source>
</evidence>
<evidence type="ECO:0000269" key="2">
    <source>
    </source>
</evidence>
<evidence type="ECO:0000269" key="3">
    <source>
    </source>
</evidence>
<evidence type="ECO:0000305" key="4"/>
<evidence type="ECO:0000312" key="5">
    <source>
        <dbReference type="Proteomes" id="UP000000437"/>
    </source>
</evidence>
<reference key="1">
    <citation type="submission" date="2004-07" db="EMBL/GenBank/DDBJ databases">
        <authorList>
            <consortium name="NIH - Zebrafish Gene Collection (ZGC) project"/>
        </authorList>
    </citation>
    <scope>NUCLEOTIDE SEQUENCE [LARGE SCALE MRNA]</scope>
</reference>
<reference key="2">
    <citation type="journal article" date="2013" name="Am. J. Hum. Genet.">
        <title>Mutations in GDP-mannose pyrophosphorylase B cause congenital and limb-girdle muscular dystrophies associated with hypoglycosylation of alpha-dystroglycan.</title>
        <authorList>
            <consortium name="UK10K Consortium"/>
            <person name="Carss K.J."/>
            <person name="Stevens E."/>
            <person name="Foley A.R."/>
            <person name="Cirak S."/>
            <person name="Riemersma M."/>
            <person name="Torelli S."/>
            <person name="Hoischen A."/>
            <person name="Willer T."/>
            <person name="van Scherpenzeel M."/>
            <person name="Moore S.A."/>
            <person name="Messina S."/>
            <person name="Bertini E."/>
            <person name="Boennemann C.G."/>
            <person name="Abdenur J.E."/>
            <person name="Grosmann C.M."/>
            <person name="Kesari A."/>
            <person name="Punetha J."/>
            <person name="Quinlivan R."/>
            <person name="Waddell L.B."/>
            <person name="Young H.K."/>
            <person name="Wraige E."/>
            <person name="Yau S."/>
            <person name="Brodd L."/>
            <person name="Feng L."/>
            <person name="Sewry C."/>
            <person name="MacArthur D.G."/>
            <person name="North K.N."/>
            <person name="Hoffman E."/>
            <person name="Stemple D.L."/>
            <person name="Hurles M.E."/>
            <person name="van Bokhoven H."/>
            <person name="Campbell K.P."/>
            <person name="Lefeber D.J."/>
            <person name="Lin Y.Y."/>
            <person name="Muntoni F."/>
        </authorList>
    </citation>
    <scope>DEVELOPMENTAL STAGE</scope>
    <scope>DISRUPTION PHENOTYPE</scope>
</reference>
<reference key="3">
    <citation type="journal article" date="2021" name="Nat. Struct. Mol. Biol.">
        <title>Cryo-EM structures of human GMPPA-GMPPB complex reveal how cells maintain GDP-mannose homeostasis.</title>
        <authorList>
            <person name="Zheng L."/>
            <person name="Liu Z."/>
            <person name="Wang Y."/>
            <person name="Yang F."/>
            <person name="Wang J."/>
            <person name="Huang W."/>
            <person name="Qin J."/>
            <person name="Tian M."/>
            <person name="Cai X."/>
            <person name="Liu X."/>
            <person name="Mo X."/>
            <person name="Gao N."/>
            <person name="Jia D."/>
        </authorList>
    </citation>
    <scope>FUNCTION</scope>
    <scope>CATALYTIC ACTIVITY</scope>
    <scope>PATHWAY</scope>
    <scope>DISRUPTION PHENOTYPE</scope>
</reference>
<protein>
    <recommendedName>
        <fullName evidence="4">Mannose-1-phosphate guanylyltransferase catalytic subunit beta</fullName>
        <ecNumber evidence="3">2.7.7.13</ecNumber>
    </recommendedName>
    <alternativeName>
        <fullName>GDP-mannose pyrophosphorylase B</fullName>
    </alternativeName>
    <alternativeName>
        <fullName>GTP-mannose-1-phosphate guanylyltransferase beta</fullName>
    </alternativeName>
</protein>
<proteinExistence type="evidence at protein level"/>
<comment type="function">
    <text evidence="1 3">Catalytic subunit of the GMPPA-GMPPB mannose-1-phosphate guanylyltransferase complex (By similarity). Catalyzes the formation of GDP-mannose, an essential precursor of glycan moieties of glycoproteins and glycolipids (PubMed:33986552). Can catalyze the reverse reaction in vitro (By similarity). Together with GMPPA regulates GDP-alpha-D-mannose levels (PubMed:33986552).</text>
</comment>
<comment type="catalytic activity">
    <reaction evidence="3">
        <text>alpha-D-mannose 1-phosphate + GTP + H(+) = GDP-alpha-D-mannose + diphosphate</text>
        <dbReference type="Rhea" id="RHEA:15229"/>
        <dbReference type="ChEBI" id="CHEBI:15378"/>
        <dbReference type="ChEBI" id="CHEBI:33019"/>
        <dbReference type="ChEBI" id="CHEBI:37565"/>
        <dbReference type="ChEBI" id="CHEBI:57527"/>
        <dbReference type="ChEBI" id="CHEBI:58409"/>
        <dbReference type="EC" id="2.7.7.13"/>
    </reaction>
    <physiologicalReaction direction="left-to-right" evidence="3">
        <dbReference type="Rhea" id="RHEA:15230"/>
    </physiologicalReaction>
    <physiologicalReaction direction="right-to-left" evidence="1">
        <dbReference type="Rhea" id="RHEA:15231"/>
    </physiologicalReaction>
</comment>
<comment type="cofactor">
    <cofactor evidence="1">
        <name>Mg(2+)</name>
        <dbReference type="ChEBI" id="CHEBI:18420"/>
    </cofactor>
    <text evidence="1">Coordinates binding with substrate and required for enzymatic activity.</text>
</comment>
<comment type="activity regulation">
    <text evidence="1">Enzyme activity is reduced by incorporation into the GMPPA-GMPPB mannose-1-phosphate guanylyltransferase complex. Allosterically inhibited, when part of the GMPPA-GMPPB complex, by GDP-alpha-D-mannose binding to GMPPA.</text>
</comment>
<comment type="pathway">
    <text evidence="3">Nucleotide-sugar biosynthesis; GDP-alpha-D-mannose biosynthesis; GDP-alpha-D-mannose from alpha-D-mannose 1-phosphate (GTP route): step 1/1.</text>
</comment>
<comment type="subunit">
    <text evidence="1">Component of the GMPPA-GMPPB mannose-1-phosphate guanylyltransferase complex composed of 4 gmppa subunits and 8 gmppb subunits; the complex is organized into three layers, a central layer made up of 2 gmppa dimers sandwiched between two layers each made up of 2 gmppb dimers (By similarity). Catalytic activity of gmppb is reduced when part of the complex and binding of GDP-alpha-D-Mannose by gmppa induces allosteric feedback inhibition of gmppb (By similarity).</text>
</comment>
<comment type="developmental stage">
    <text evidence="2">Expressed throughout all stages of development.</text>
</comment>
<comment type="domain">
    <text evidence="1">The N-terminal substrate-binding domain adopts a Rossman-like fold and has a binding pocket for GTP or GDP-alpha-D-mannose (By similarity). Substrate binding is coordinated by an Mg(2+) ion (By similarity).</text>
</comment>
<comment type="domain">
    <text evidence="1">The C-terminal domain consists of a series of tandem hexapeptide repeats that adopt a beta-helix conformation (By similarity). The beta-helix forms several protein interaction surfaces involved in assembly of the GMPPA-GMPPB mannose-1-phosphate guanylyltransferase complex (By similarity).</text>
</comment>
<comment type="disruption phenotype">
    <text evidence="2 3">Morpholino knockdown of the gene results in smaller embryos with multiple anomalies, including bent tails, hypopigmentation, microphthalmia, hydrocephalus, and reduced motility (PubMed:23768512). Caudal primary motor neurons are shortened (PubMed:33986552). Muscle fibers are sparse and disorganized, and the myosepta are damaged or incompletely developed (PubMed:23768512, PubMed:33986552). There is also evidence of sarcolemmal damage (PubMed:23768512). Immunostaining shows defective glycosylation of DAG1 associated with abnormal structure of the basement membrane (PubMed:23768512).</text>
</comment>
<comment type="similarity">
    <text evidence="4">Belongs to the transferase hexapeptide repeat family.</text>
</comment>
<name>GMPPB_DANRE</name>
<organism evidence="5">
    <name type="scientific">Danio rerio</name>
    <name type="common">Zebrafish</name>
    <name type="synonym">Brachydanio rerio</name>
    <dbReference type="NCBI Taxonomy" id="7955"/>
    <lineage>
        <taxon>Eukaryota</taxon>
        <taxon>Metazoa</taxon>
        <taxon>Chordata</taxon>
        <taxon>Craniata</taxon>
        <taxon>Vertebrata</taxon>
        <taxon>Euteleostomi</taxon>
        <taxon>Actinopterygii</taxon>
        <taxon>Neopterygii</taxon>
        <taxon>Teleostei</taxon>
        <taxon>Ostariophysi</taxon>
        <taxon>Cypriniformes</taxon>
        <taxon>Danionidae</taxon>
        <taxon>Danioninae</taxon>
        <taxon>Danio</taxon>
    </lineage>
</organism>
<sequence length="360" mass="40144">MKALILVGGYGTRLRPLTLTVPKPLVEFCNKPILLHQVEALVKAGVRHVILAVSYMSELLEREMRAQEQRLGIKISLSHEKEPLGTAGPLALARELLTDNQEPFFVLNSDVICDFPFDDMLKFHQQHGREGTIVVTKVEEPSKYGVVVYEGDSGRIHRFVEKPQVFVSNKINAGMYIFSPAMLRRIQLRPTSIEKEIFPVMAEEGQLYAMELQGFWMDIGQPKDFLTGMCMYLQSVRQQAPERLRAGPGFLGNVLVDPTAVIGQNCTIGPNVTIGAGVVLEDGVRVKRCTILKGAHIRSHSWLESCIVGWSSSVGQWVRMENVTVLGEDVIVNDELYINGANVLPHKSITDSVPEPRIIM</sequence>
<feature type="chain" id="PRO_0000307165" description="Mannose-1-phosphate guanylyltransferase catalytic subunit beta">
    <location>
        <begin position="1"/>
        <end position="360"/>
    </location>
</feature>
<feature type="region of interest" description="Substrate-binding domain" evidence="1">
    <location>
        <begin position="2"/>
        <end position="222"/>
    </location>
</feature>
<feature type="region of interest" description="Hexapeptide repeat domain" evidence="1">
    <location>
        <begin position="245"/>
        <end position="360"/>
    </location>
</feature>
<feature type="active site" evidence="1">
    <location>
        <position position="162"/>
    </location>
</feature>
<feature type="binding site" evidence="1">
    <location>
        <position position="110"/>
    </location>
    <ligand>
        <name>GDP-alpha-D-mannose</name>
        <dbReference type="ChEBI" id="CHEBI:57527"/>
    </ligand>
</feature>
<feature type="binding site" evidence="1">
    <location>
        <position position="110"/>
    </location>
    <ligand>
        <name>Mg(2+)</name>
        <dbReference type="ChEBI" id="CHEBI:18420"/>
    </ligand>
</feature>
<feature type="binding site" evidence="1">
    <location>
        <position position="218"/>
    </location>
    <ligand>
        <name>GDP-alpha-D-mannose</name>
        <dbReference type="ChEBI" id="CHEBI:57527"/>
    </ligand>
</feature>
<feature type="binding site" evidence="1">
    <location>
        <position position="218"/>
    </location>
    <ligand>
        <name>Mg(2+)</name>
        <dbReference type="ChEBI" id="CHEBI:18420"/>
    </ligand>
</feature>
<accession>Q6DBU5</accession>
<gene>
    <name type="primary">gmppb</name>
    <name type="ORF">zgc:92026</name>
</gene>